<reference key="1">
    <citation type="journal article" date="2001" name="DNA Res.">
        <title>Complete genomic sequence of the filamentous nitrogen-fixing cyanobacterium Anabaena sp. strain PCC 7120.</title>
        <authorList>
            <person name="Kaneko T."/>
            <person name="Nakamura Y."/>
            <person name="Wolk C.P."/>
            <person name="Kuritz T."/>
            <person name="Sasamoto S."/>
            <person name="Watanabe A."/>
            <person name="Iriguchi M."/>
            <person name="Ishikawa A."/>
            <person name="Kawashima K."/>
            <person name="Kimura T."/>
            <person name="Kishida Y."/>
            <person name="Kohara M."/>
            <person name="Matsumoto M."/>
            <person name="Matsuno A."/>
            <person name="Muraki A."/>
            <person name="Nakazaki N."/>
            <person name="Shimpo S."/>
            <person name="Sugimoto M."/>
            <person name="Takazawa M."/>
            <person name="Yamada M."/>
            <person name="Yasuda M."/>
            <person name="Tabata S."/>
        </authorList>
    </citation>
    <scope>NUCLEOTIDE SEQUENCE [LARGE SCALE GENOMIC DNA]</scope>
    <source>
        <strain>PCC 7120 / SAG 25.82 / UTEX 2576</strain>
    </source>
</reference>
<accession>Q8YQ64</accession>
<proteinExistence type="inferred from homology"/>
<keyword id="KW-0997">Cell inner membrane</keyword>
<keyword id="KW-1003">Cell membrane</keyword>
<keyword id="KW-0378">Hydrolase</keyword>
<keyword id="KW-0472">Membrane</keyword>
<keyword id="KW-0479">Metal-binding</keyword>
<keyword id="KW-0482">Metalloprotease</keyword>
<keyword id="KW-0645">Protease</keyword>
<keyword id="KW-1185">Reference proteome</keyword>
<keyword id="KW-0812">Transmembrane</keyword>
<keyword id="KW-1133">Transmembrane helix</keyword>
<keyword id="KW-0862">Zinc</keyword>
<name>Y3971_NOSS1</name>
<protein>
    <recommendedName>
        <fullName>Putative zinc metalloprotease all3971</fullName>
        <ecNumber>3.4.24.-</ecNumber>
    </recommendedName>
</protein>
<evidence type="ECO:0000250" key="1"/>
<evidence type="ECO:0000255" key="2"/>
<evidence type="ECO:0000255" key="3">
    <source>
        <dbReference type="PROSITE-ProRule" id="PRU00143"/>
    </source>
</evidence>
<evidence type="ECO:0000255" key="4">
    <source>
        <dbReference type="PROSITE-ProRule" id="PRU10095"/>
    </source>
</evidence>
<evidence type="ECO:0000305" key="5"/>
<sequence>MSVLAAIAVLAVLILVHELGHFVAARSQGIHVNRFSLGFGPVLWKYQGAETEYAIRAFPLGGFVGFPDDDPDSDIPPNDPNLLRNRPILDRAIVISAGVIANLIFAYMLLLAQVGFVGIGQASQPGVSIQQLAPEVSAVATNAGLKPGDVILSANQKEFGTSLQEIEALRDIIKNSPGKSIQLTVARGDERLSVNVIPEAKPAGGSIGIGLAPNGKVERRPVSLSKAFSVGASEFQRIVVMTFKGFGQLVTNFGETASQVAGPIKIVEIGANIAQNDTGSLFFFAALISINLAVINILPLPALDGGQLAFLLIEGLRGKPLPNRIQEGVMQTGLVLLLGLGIFLIVKETTQLTTQLEWVQKLFQ</sequence>
<gene>
    <name type="ordered locus">all3971</name>
</gene>
<dbReference type="EC" id="3.4.24.-"/>
<dbReference type="EMBL" id="BA000019">
    <property type="protein sequence ID" value="BAB75670.1"/>
    <property type="molecule type" value="Genomic_DNA"/>
</dbReference>
<dbReference type="PIR" id="AD2302">
    <property type="entry name" value="AD2302"/>
</dbReference>
<dbReference type="SMR" id="Q8YQ64"/>
<dbReference type="STRING" id="103690.gene:10496013"/>
<dbReference type="KEGG" id="ana:all3971"/>
<dbReference type="eggNOG" id="COG0750">
    <property type="taxonomic scope" value="Bacteria"/>
</dbReference>
<dbReference type="OrthoDB" id="9782003at2"/>
<dbReference type="Proteomes" id="UP000002483">
    <property type="component" value="Chromosome"/>
</dbReference>
<dbReference type="GO" id="GO:0005886">
    <property type="term" value="C:plasma membrane"/>
    <property type="evidence" value="ECO:0007669"/>
    <property type="project" value="UniProtKB-SubCell"/>
</dbReference>
<dbReference type="GO" id="GO:0046872">
    <property type="term" value="F:metal ion binding"/>
    <property type="evidence" value="ECO:0007669"/>
    <property type="project" value="UniProtKB-KW"/>
</dbReference>
<dbReference type="GO" id="GO:0004222">
    <property type="term" value="F:metalloendopeptidase activity"/>
    <property type="evidence" value="ECO:0007669"/>
    <property type="project" value="InterPro"/>
</dbReference>
<dbReference type="GO" id="GO:0006508">
    <property type="term" value="P:proteolysis"/>
    <property type="evidence" value="ECO:0007669"/>
    <property type="project" value="UniProtKB-KW"/>
</dbReference>
<dbReference type="CDD" id="cd06163">
    <property type="entry name" value="S2P-M50_PDZ_RseP-like"/>
    <property type="match status" value="1"/>
</dbReference>
<dbReference type="Gene3D" id="2.30.42.10">
    <property type="match status" value="1"/>
</dbReference>
<dbReference type="InterPro" id="IPR001478">
    <property type="entry name" value="PDZ"/>
</dbReference>
<dbReference type="InterPro" id="IPR036034">
    <property type="entry name" value="PDZ_sf"/>
</dbReference>
<dbReference type="InterPro" id="IPR004387">
    <property type="entry name" value="Pept_M50_Zn"/>
</dbReference>
<dbReference type="InterPro" id="IPR008915">
    <property type="entry name" value="Peptidase_M50"/>
</dbReference>
<dbReference type="NCBIfam" id="TIGR00054">
    <property type="entry name" value="RIP metalloprotease RseP"/>
    <property type="match status" value="2"/>
</dbReference>
<dbReference type="PANTHER" id="PTHR42837:SF2">
    <property type="entry name" value="MEMBRANE METALLOPROTEASE ARASP2, CHLOROPLASTIC-RELATED"/>
    <property type="match status" value="1"/>
</dbReference>
<dbReference type="PANTHER" id="PTHR42837">
    <property type="entry name" value="REGULATOR OF SIGMA-E PROTEASE RSEP"/>
    <property type="match status" value="1"/>
</dbReference>
<dbReference type="Pfam" id="PF13180">
    <property type="entry name" value="PDZ_2"/>
    <property type="match status" value="1"/>
</dbReference>
<dbReference type="Pfam" id="PF02163">
    <property type="entry name" value="Peptidase_M50"/>
    <property type="match status" value="1"/>
</dbReference>
<dbReference type="SMART" id="SM00228">
    <property type="entry name" value="PDZ"/>
    <property type="match status" value="1"/>
</dbReference>
<dbReference type="SUPFAM" id="SSF50156">
    <property type="entry name" value="PDZ domain-like"/>
    <property type="match status" value="1"/>
</dbReference>
<dbReference type="PROSITE" id="PS50106">
    <property type="entry name" value="PDZ"/>
    <property type="match status" value="1"/>
</dbReference>
<dbReference type="PROSITE" id="PS00142">
    <property type="entry name" value="ZINC_PROTEASE"/>
    <property type="match status" value="1"/>
</dbReference>
<comment type="cofactor">
    <cofactor evidence="5">
        <name>Zn(2+)</name>
        <dbReference type="ChEBI" id="CHEBI:29105"/>
    </cofactor>
</comment>
<comment type="subcellular location">
    <subcellularLocation>
        <location evidence="1">Cell inner membrane</location>
        <topology evidence="1">Multi-pass membrane protein</topology>
    </subcellularLocation>
</comment>
<comment type="similarity">
    <text evidence="5">Belongs to the peptidase M50B family.</text>
</comment>
<feature type="chain" id="PRO_0000088426" description="Putative zinc metalloprotease all3971">
    <location>
        <begin position="1"/>
        <end position="364"/>
    </location>
</feature>
<feature type="transmembrane region" description="Helical" evidence="2">
    <location>
        <begin position="92"/>
        <end position="114"/>
    </location>
</feature>
<feature type="transmembrane region" description="Helical" evidence="2">
    <location>
        <begin position="281"/>
        <end position="303"/>
    </location>
</feature>
<feature type="transmembrane region" description="Helical" evidence="2">
    <location>
        <begin position="329"/>
        <end position="346"/>
    </location>
</feature>
<feature type="domain" description="PDZ" evidence="3">
    <location>
        <begin position="103"/>
        <end position="188"/>
    </location>
</feature>
<feature type="active site" evidence="4">
    <location>
        <position position="18"/>
    </location>
</feature>
<feature type="binding site" evidence="4">
    <location>
        <position position="17"/>
    </location>
    <ligand>
        <name>Zn(2+)</name>
        <dbReference type="ChEBI" id="CHEBI:29105"/>
        <note>catalytic</note>
    </ligand>
</feature>
<feature type="binding site" evidence="4">
    <location>
        <position position="21"/>
    </location>
    <ligand>
        <name>Zn(2+)</name>
        <dbReference type="ChEBI" id="CHEBI:29105"/>
        <note>catalytic</note>
    </ligand>
</feature>
<organism>
    <name type="scientific">Nostoc sp. (strain PCC 7120 / SAG 25.82 / UTEX 2576)</name>
    <dbReference type="NCBI Taxonomy" id="103690"/>
    <lineage>
        <taxon>Bacteria</taxon>
        <taxon>Bacillati</taxon>
        <taxon>Cyanobacteriota</taxon>
        <taxon>Cyanophyceae</taxon>
        <taxon>Nostocales</taxon>
        <taxon>Nostocaceae</taxon>
        <taxon>Nostoc</taxon>
    </lineage>
</organism>